<sequence length="426" mass="47581">MEFQDHFSQEMVLHQQQQQQQQQQNAVLRSMLPESPHHDARKSPPTWLNTSLLRQQHSQFGNASSPSSAAAAAAVAGGNNFLHLQTSNSDSSNSNQWLSPTAAAGGGSNGGGSGHNDELSESMNFAKKMSQQHSGGGEENNNNNNNNNNNNNEEENSWEREKCKADILNHPLYDQLLSAHVSCLRIATPVDQLPRIDAQLAQSQNVVAKYSVLGQGQPPLDDKDLDQFMTHYVLLLSSFKEQLQQHVRVHAMEAVMACWELEQSLQSLTGVAPGEGTGATMSDDDDDQADSDTNFLDGGFDGPDSMGFGPLVPTESERSLMERVRQELKHELKQGYKEKIVDIREEILRKRRAGKLPGDTTSVLKAWWQSHSKWPYPTEEDKARLVQETGLQLKQINNWFINQRKRNWHSNPSTSSSQKSQTQECR</sequence>
<proteinExistence type="evidence at transcript level"/>
<name>LET12_SOLLC</name>
<keyword id="KW-0238">DNA-binding</keyword>
<keyword id="KW-0371">Homeobox</keyword>
<keyword id="KW-0539">Nucleus</keyword>
<keyword id="KW-1185">Reference proteome</keyword>
<evidence type="ECO:0000255" key="1">
    <source>
        <dbReference type="PROSITE-ProRule" id="PRU00108"/>
    </source>
</evidence>
<evidence type="ECO:0000255" key="2">
    <source>
        <dbReference type="PROSITE-ProRule" id="PRU00559"/>
    </source>
</evidence>
<evidence type="ECO:0000256" key="3">
    <source>
        <dbReference type="SAM" id="MobiDB-lite"/>
    </source>
</evidence>
<evidence type="ECO:0000305" key="4"/>
<accession>O22300</accession>
<protein>
    <recommendedName>
        <fullName>Homeobox protein knotted-1-like LET12</fullName>
    </recommendedName>
</protein>
<organism>
    <name type="scientific">Solanum lycopersicum</name>
    <name type="common">Tomato</name>
    <name type="synonym">Lycopersicon esculentum</name>
    <dbReference type="NCBI Taxonomy" id="4081"/>
    <lineage>
        <taxon>Eukaryota</taxon>
        <taxon>Viridiplantae</taxon>
        <taxon>Streptophyta</taxon>
        <taxon>Embryophyta</taxon>
        <taxon>Tracheophyta</taxon>
        <taxon>Spermatophyta</taxon>
        <taxon>Magnoliopsida</taxon>
        <taxon>eudicotyledons</taxon>
        <taxon>Gunneridae</taxon>
        <taxon>Pentapetalae</taxon>
        <taxon>asterids</taxon>
        <taxon>lamiids</taxon>
        <taxon>Solanales</taxon>
        <taxon>Solanaceae</taxon>
        <taxon>Solanoideae</taxon>
        <taxon>Solaneae</taxon>
        <taxon>Solanum</taxon>
        <taxon>Solanum subgen. Lycopersicon</taxon>
    </lineage>
</organism>
<feature type="chain" id="PRO_0000048974" description="Homeobox protein knotted-1-like LET12">
    <location>
        <begin position="1"/>
        <end position="426"/>
    </location>
</feature>
<feature type="domain" description="ELK" evidence="2">
    <location>
        <begin position="327"/>
        <end position="347"/>
    </location>
</feature>
<feature type="DNA-binding region" description="Homeobox; TALE-type" evidence="1">
    <location>
        <begin position="348"/>
        <end position="411"/>
    </location>
</feature>
<feature type="region of interest" description="Disordered" evidence="3">
    <location>
        <begin position="1"/>
        <end position="26"/>
    </location>
</feature>
<feature type="region of interest" description="Disordered" evidence="3">
    <location>
        <begin position="85"/>
        <end position="158"/>
    </location>
</feature>
<feature type="region of interest" description="Disordered" evidence="3">
    <location>
        <begin position="270"/>
        <end position="290"/>
    </location>
</feature>
<feature type="region of interest" description="Disordered" evidence="3">
    <location>
        <begin position="406"/>
        <end position="426"/>
    </location>
</feature>
<feature type="compositionally biased region" description="Low complexity" evidence="3">
    <location>
        <begin position="15"/>
        <end position="24"/>
    </location>
</feature>
<feature type="compositionally biased region" description="Gly residues" evidence="3">
    <location>
        <begin position="104"/>
        <end position="114"/>
    </location>
</feature>
<feature type="compositionally biased region" description="Low complexity" evidence="3">
    <location>
        <begin position="139"/>
        <end position="151"/>
    </location>
</feature>
<feature type="compositionally biased region" description="Low complexity" evidence="3">
    <location>
        <begin position="413"/>
        <end position="426"/>
    </location>
</feature>
<comment type="function">
    <text>May have a role to play in formative events in ovule and embryo morphogenesis.</text>
</comment>
<comment type="subcellular location">
    <subcellularLocation>
        <location evidence="4">Nucleus</location>
    </subcellularLocation>
</comment>
<comment type="tissue specificity">
    <text>Ubiquitously expressed in the mature plant.</text>
</comment>
<comment type="similarity">
    <text evidence="2">Belongs to the TALE/KNOX homeobox family.</text>
</comment>
<reference key="1">
    <citation type="journal article" date="1998" name="Plant Mol. Biol.">
        <title>Isolation and characterization of two knotted-like homeobox genes from tomato.</title>
        <authorList>
            <person name="Janssen B.-J."/>
            <person name="Williams A."/>
            <person name="Chen J.J."/>
            <person name="Mathern J."/>
            <person name="Hake S."/>
            <person name="Sinha N."/>
        </authorList>
    </citation>
    <scope>NUCLEOTIDE SEQUENCE [MRNA]</scope>
    <source>
        <strain>cv. VFNT Cherry</strain>
    </source>
</reference>
<gene>
    <name type="primary">LET12</name>
</gene>
<dbReference type="EMBL" id="AF000142">
    <property type="protein sequence ID" value="AAC49918.1"/>
    <property type="molecule type" value="mRNA"/>
</dbReference>
<dbReference type="PIR" id="T04318">
    <property type="entry name" value="T04318"/>
</dbReference>
<dbReference type="SMR" id="O22300"/>
<dbReference type="STRING" id="4081.O22300"/>
<dbReference type="PaxDb" id="4081-Solyc07g007120.2.1"/>
<dbReference type="eggNOG" id="KOG0773">
    <property type="taxonomic scope" value="Eukaryota"/>
</dbReference>
<dbReference type="InParanoid" id="O22300"/>
<dbReference type="Proteomes" id="UP000004994">
    <property type="component" value="Unplaced"/>
</dbReference>
<dbReference type="ExpressionAtlas" id="O22300">
    <property type="expression patterns" value="baseline and differential"/>
</dbReference>
<dbReference type="GO" id="GO:0005634">
    <property type="term" value="C:nucleus"/>
    <property type="evidence" value="ECO:0000318"/>
    <property type="project" value="GO_Central"/>
</dbReference>
<dbReference type="GO" id="GO:0003677">
    <property type="term" value="F:DNA binding"/>
    <property type="evidence" value="ECO:0007669"/>
    <property type="project" value="UniProtKB-KW"/>
</dbReference>
<dbReference type="GO" id="GO:0006355">
    <property type="term" value="P:regulation of DNA-templated transcription"/>
    <property type="evidence" value="ECO:0007669"/>
    <property type="project" value="InterPro"/>
</dbReference>
<dbReference type="CDD" id="cd00086">
    <property type="entry name" value="homeodomain"/>
    <property type="match status" value="1"/>
</dbReference>
<dbReference type="FunFam" id="1.10.10.60:FF:000143">
    <property type="entry name" value="homeobox protein knotted-1-like 3 isoform X1"/>
    <property type="match status" value="1"/>
</dbReference>
<dbReference type="Gene3D" id="1.10.10.60">
    <property type="entry name" value="Homeodomain-like"/>
    <property type="match status" value="1"/>
</dbReference>
<dbReference type="InterPro" id="IPR005539">
    <property type="entry name" value="ELK_dom"/>
</dbReference>
<dbReference type="InterPro" id="IPR001356">
    <property type="entry name" value="HD"/>
</dbReference>
<dbReference type="InterPro" id="IPR009057">
    <property type="entry name" value="Homeodomain-like_sf"/>
</dbReference>
<dbReference type="InterPro" id="IPR008422">
    <property type="entry name" value="KN_HD"/>
</dbReference>
<dbReference type="InterPro" id="IPR005540">
    <property type="entry name" value="KNOX1"/>
</dbReference>
<dbReference type="InterPro" id="IPR005541">
    <property type="entry name" value="KNOX2"/>
</dbReference>
<dbReference type="InterPro" id="IPR050224">
    <property type="entry name" value="TALE_homeobox"/>
</dbReference>
<dbReference type="PANTHER" id="PTHR11850">
    <property type="entry name" value="HOMEOBOX PROTEIN TRANSCRIPTION FACTORS"/>
    <property type="match status" value="1"/>
</dbReference>
<dbReference type="Pfam" id="PF03789">
    <property type="entry name" value="ELK"/>
    <property type="match status" value="1"/>
</dbReference>
<dbReference type="Pfam" id="PF05920">
    <property type="entry name" value="Homeobox_KN"/>
    <property type="match status" value="1"/>
</dbReference>
<dbReference type="Pfam" id="PF03790">
    <property type="entry name" value="KNOX1"/>
    <property type="match status" value="1"/>
</dbReference>
<dbReference type="Pfam" id="PF03791">
    <property type="entry name" value="KNOX2"/>
    <property type="match status" value="1"/>
</dbReference>
<dbReference type="SMART" id="SM01188">
    <property type="entry name" value="ELK"/>
    <property type="match status" value="1"/>
</dbReference>
<dbReference type="SMART" id="SM00389">
    <property type="entry name" value="HOX"/>
    <property type="match status" value="1"/>
</dbReference>
<dbReference type="SMART" id="SM01255">
    <property type="entry name" value="KNOX1"/>
    <property type="match status" value="1"/>
</dbReference>
<dbReference type="SMART" id="SM01256">
    <property type="entry name" value="KNOX2"/>
    <property type="match status" value="1"/>
</dbReference>
<dbReference type="SUPFAM" id="SSF46689">
    <property type="entry name" value="Homeodomain-like"/>
    <property type="match status" value="1"/>
</dbReference>
<dbReference type="PROSITE" id="PS51213">
    <property type="entry name" value="ELK"/>
    <property type="match status" value="1"/>
</dbReference>
<dbReference type="PROSITE" id="PS00027">
    <property type="entry name" value="HOMEOBOX_1"/>
    <property type="match status" value="1"/>
</dbReference>
<dbReference type="PROSITE" id="PS50071">
    <property type="entry name" value="HOMEOBOX_2"/>
    <property type="match status" value="1"/>
</dbReference>